<accession>Q6BXG6</accession>
<evidence type="ECO:0000250" key="1"/>
<evidence type="ECO:0000250" key="2">
    <source>
        <dbReference type="UniProtKB" id="P13517"/>
    </source>
</evidence>
<evidence type="ECO:0000250" key="3">
    <source>
        <dbReference type="UniProtKB" id="Q9HGP5"/>
    </source>
</evidence>
<evidence type="ECO:0000256" key="4">
    <source>
        <dbReference type="SAM" id="MobiDB-lite"/>
    </source>
</evidence>
<evidence type="ECO:0000305" key="5"/>
<keyword id="KW-0117">Actin capping</keyword>
<keyword id="KW-0009">Actin-binding</keyword>
<keyword id="KW-0963">Cytoplasm</keyword>
<keyword id="KW-0206">Cytoskeleton</keyword>
<keyword id="KW-1185">Reference proteome</keyword>
<dbReference type="EMBL" id="CR382134">
    <property type="protein sequence ID" value="CAG85094.2"/>
    <property type="molecule type" value="Genomic_DNA"/>
</dbReference>
<dbReference type="RefSeq" id="XP_457103.2">
    <property type="nucleotide sequence ID" value="XM_457103.1"/>
</dbReference>
<dbReference type="SMR" id="Q6BXG6"/>
<dbReference type="FunCoup" id="Q6BXG6">
    <property type="interactions" value="917"/>
</dbReference>
<dbReference type="STRING" id="284592.Q6BXG6"/>
<dbReference type="GeneID" id="2913125"/>
<dbReference type="KEGG" id="dha:DEHA2B03190g"/>
<dbReference type="eggNOG" id="KOG3174">
    <property type="taxonomic scope" value="Eukaryota"/>
</dbReference>
<dbReference type="HOGENOM" id="CLU_045864_1_1_1"/>
<dbReference type="InParanoid" id="Q6BXG6"/>
<dbReference type="OMA" id="WSNKYYP"/>
<dbReference type="OrthoDB" id="9979678at2759"/>
<dbReference type="Proteomes" id="UP000000599">
    <property type="component" value="Chromosome B"/>
</dbReference>
<dbReference type="GO" id="GO:0099079">
    <property type="term" value="C:actin body"/>
    <property type="evidence" value="ECO:0007669"/>
    <property type="project" value="EnsemblFungi"/>
</dbReference>
<dbReference type="GO" id="GO:0030479">
    <property type="term" value="C:actin cortical patch"/>
    <property type="evidence" value="ECO:0007669"/>
    <property type="project" value="UniProtKB-SubCell"/>
</dbReference>
<dbReference type="GO" id="GO:0008290">
    <property type="term" value="C:F-actin capping protein complex"/>
    <property type="evidence" value="ECO:0007669"/>
    <property type="project" value="EnsemblFungi"/>
</dbReference>
<dbReference type="GO" id="GO:0043332">
    <property type="term" value="C:mating projection tip"/>
    <property type="evidence" value="ECO:0007669"/>
    <property type="project" value="EnsemblFungi"/>
</dbReference>
<dbReference type="GO" id="GO:0031097">
    <property type="term" value="C:medial cortex"/>
    <property type="evidence" value="ECO:0007669"/>
    <property type="project" value="EnsemblFungi"/>
</dbReference>
<dbReference type="GO" id="GO:0005634">
    <property type="term" value="C:nucleus"/>
    <property type="evidence" value="ECO:0007669"/>
    <property type="project" value="EnsemblFungi"/>
</dbReference>
<dbReference type="GO" id="GO:0051015">
    <property type="term" value="F:actin filament binding"/>
    <property type="evidence" value="ECO:0007669"/>
    <property type="project" value="EnsemblFungi"/>
</dbReference>
<dbReference type="GO" id="GO:0044396">
    <property type="term" value="P:actin cortical patch organization"/>
    <property type="evidence" value="ECO:0007669"/>
    <property type="project" value="EnsemblFungi"/>
</dbReference>
<dbReference type="GO" id="GO:0051016">
    <property type="term" value="P:barbed-end actin filament capping"/>
    <property type="evidence" value="ECO:0007669"/>
    <property type="project" value="EnsemblFungi"/>
</dbReference>
<dbReference type="GO" id="GO:1904600">
    <property type="term" value="P:mating projection actin fusion focus assembly"/>
    <property type="evidence" value="ECO:0007669"/>
    <property type="project" value="EnsemblFungi"/>
</dbReference>
<dbReference type="GO" id="GO:1903475">
    <property type="term" value="P:mitotic actomyosin contractile ring assembly"/>
    <property type="evidence" value="ECO:0007669"/>
    <property type="project" value="EnsemblFungi"/>
</dbReference>
<dbReference type="GO" id="GO:1902404">
    <property type="term" value="P:mitotic actomyosin contractile ring contraction"/>
    <property type="evidence" value="ECO:0007669"/>
    <property type="project" value="EnsemblFungi"/>
</dbReference>
<dbReference type="FunFam" id="1.20.58.570:FF:000001">
    <property type="entry name" value="F-actin-capping protein subunit beta"/>
    <property type="match status" value="1"/>
</dbReference>
<dbReference type="Gene3D" id="1.20.58.570">
    <property type="match status" value="1"/>
</dbReference>
<dbReference type="Gene3D" id="3.90.1150.210">
    <property type="entry name" value="F-actin capping protein, beta subunit"/>
    <property type="match status" value="1"/>
</dbReference>
<dbReference type="InterPro" id="IPR037282">
    <property type="entry name" value="CapZ_alpha/beta"/>
</dbReference>
<dbReference type="InterPro" id="IPR042276">
    <property type="entry name" value="CapZ_alpha/beta_2"/>
</dbReference>
<dbReference type="InterPro" id="IPR001698">
    <property type="entry name" value="CAPZB"/>
</dbReference>
<dbReference type="InterPro" id="IPR043175">
    <property type="entry name" value="CAPZB_N"/>
</dbReference>
<dbReference type="InterPro" id="IPR019771">
    <property type="entry name" value="F-actin_capping_bsu_CS"/>
</dbReference>
<dbReference type="PANTHER" id="PTHR10619">
    <property type="entry name" value="F-ACTIN-CAPPING PROTEIN SUBUNIT BETA"/>
    <property type="match status" value="1"/>
</dbReference>
<dbReference type="PANTHER" id="PTHR10619:SF0">
    <property type="entry name" value="F-ACTIN-CAPPING PROTEIN SUBUNIT BETA ISOFORMS 1 AND 2"/>
    <property type="match status" value="1"/>
</dbReference>
<dbReference type="Pfam" id="PF01115">
    <property type="entry name" value="F_actin_cap_B"/>
    <property type="match status" value="1"/>
</dbReference>
<dbReference type="PRINTS" id="PR00192">
    <property type="entry name" value="FACTINCAPB"/>
</dbReference>
<dbReference type="SUPFAM" id="SSF90096">
    <property type="entry name" value="Subunits of heterodimeric actin filament capping protein Capz"/>
    <property type="match status" value="1"/>
</dbReference>
<dbReference type="PROSITE" id="PS00231">
    <property type="entry name" value="F_ACTIN_CAPPING_BETA"/>
    <property type="match status" value="1"/>
</dbReference>
<feature type="chain" id="PRO_0000256838" description="F-actin-capping protein subunit beta">
    <location>
        <begin position="1"/>
        <end position="297"/>
    </location>
</feature>
<feature type="region of interest" description="Disordered" evidence="4">
    <location>
        <begin position="276"/>
        <end position="297"/>
    </location>
</feature>
<feature type="compositionally biased region" description="Basic and acidic residues" evidence="4">
    <location>
        <begin position="276"/>
        <end position="289"/>
    </location>
</feature>
<protein>
    <recommendedName>
        <fullName>F-actin-capping protein subunit beta</fullName>
    </recommendedName>
</protein>
<comment type="function">
    <text evidence="1">F-actin-capping proteins bind in a Ca(2+)-independent manner to the fast growing ends of actin filaments (barbed end) thereby blocking the exchange of subunits at these ends. Unlike other capping proteins (such as gelsolin and severin), these proteins do not sever actin filaments (By similarity).</text>
</comment>
<comment type="subunit">
    <text evidence="2">Component of the F-actin capping complex, composed of a heterodimer of an alpha and a beta subunit.</text>
</comment>
<comment type="subcellular location">
    <subcellularLocation>
        <location evidence="2">Cytoplasm</location>
        <location evidence="2">Cytoskeleton</location>
        <location evidence="2">Actin patch</location>
    </subcellularLocation>
    <subcellularLocation>
        <location evidence="3">Cytoplasm</location>
        <location evidence="3">Cytoskeleton</location>
    </subcellularLocation>
</comment>
<comment type="similarity">
    <text evidence="5">Belongs to the F-actin-capping protein beta subunit family.</text>
</comment>
<organism>
    <name type="scientific">Debaryomyces hansenii (strain ATCC 36239 / CBS 767 / BCRC 21394 / JCM 1990 / NBRC 0083 / IGC 2968)</name>
    <name type="common">Yeast</name>
    <name type="synonym">Torulaspora hansenii</name>
    <dbReference type="NCBI Taxonomy" id="284592"/>
    <lineage>
        <taxon>Eukaryota</taxon>
        <taxon>Fungi</taxon>
        <taxon>Dikarya</taxon>
        <taxon>Ascomycota</taxon>
        <taxon>Saccharomycotina</taxon>
        <taxon>Pichiomycetes</taxon>
        <taxon>Debaryomycetaceae</taxon>
        <taxon>Debaryomyces</taxon>
    </lineage>
</organism>
<reference key="1">
    <citation type="journal article" date="2004" name="Nature">
        <title>Genome evolution in yeasts.</title>
        <authorList>
            <person name="Dujon B."/>
            <person name="Sherman D."/>
            <person name="Fischer G."/>
            <person name="Durrens P."/>
            <person name="Casaregola S."/>
            <person name="Lafontaine I."/>
            <person name="de Montigny J."/>
            <person name="Marck C."/>
            <person name="Neuveglise C."/>
            <person name="Talla E."/>
            <person name="Goffard N."/>
            <person name="Frangeul L."/>
            <person name="Aigle M."/>
            <person name="Anthouard V."/>
            <person name="Babour A."/>
            <person name="Barbe V."/>
            <person name="Barnay S."/>
            <person name="Blanchin S."/>
            <person name="Beckerich J.-M."/>
            <person name="Beyne E."/>
            <person name="Bleykasten C."/>
            <person name="Boisrame A."/>
            <person name="Boyer J."/>
            <person name="Cattolico L."/>
            <person name="Confanioleri F."/>
            <person name="de Daruvar A."/>
            <person name="Despons L."/>
            <person name="Fabre E."/>
            <person name="Fairhead C."/>
            <person name="Ferry-Dumazet H."/>
            <person name="Groppi A."/>
            <person name="Hantraye F."/>
            <person name="Hennequin C."/>
            <person name="Jauniaux N."/>
            <person name="Joyet P."/>
            <person name="Kachouri R."/>
            <person name="Kerrest A."/>
            <person name="Koszul R."/>
            <person name="Lemaire M."/>
            <person name="Lesur I."/>
            <person name="Ma L."/>
            <person name="Muller H."/>
            <person name="Nicaud J.-M."/>
            <person name="Nikolski M."/>
            <person name="Oztas S."/>
            <person name="Ozier-Kalogeropoulos O."/>
            <person name="Pellenz S."/>
            <person name="Potier S."/>
            <person name="Richard G.-F."/>
            <person name="Straub M.-L."/>
            <person name="Suleau A."/>
            <person name="Swennen D."/>
            <person name="Tekaia F."/>
            <person name="Wesolowski-Louvel M."/>
            <person name="Westhof E."/>
            <person name="Wirth B."/>
            <person name="Zeniou-Meyer M."/>
            <person name="Zivanovic Y."/>
            <person name="Bolotin-Fukuhara M."/>
            <person name="Thierry A."/>
            <person name="Bouchier C."/>
            <person name="Caudron B."/>
            <person name="Scarpelli C."/>
            <person name="Gaillardin C."/>
            <person name="Weissenbach J."/>
            <person name="Wincker P."/>
            <person name="Souciet J.-L."/>
        </authorList>
    </citation>
    <scope>NUCLEOTIDE SEQUENCE [LARGE SCALE GENOMIC DNA]</scope>
    <source>
        <strain>ATCC 36239 / CBS 767 / BCRC 21394 / JCM 1990 / NBRC 0083 / IGC 2968</strain>
    </source>
</reference>
<gene>
    <name type="primary">CAP2</name>
    <name type="ordered locus">DEHA2B03190g</name>
</gene>
<name>CAPZB_DEBHA</name>
<proteinExistence type="inferred from homology"/>
<sequence length="297" mass="33477">MTSYDDKLDASLDLMRRLDPKNITKNLNDICTLIQNDGSETSEELTQDLLSSVDVPLRTQKCDETGKEYLCCDYNRDGDSYRSPWSNKYFPVVAQDSDELPPPFPSNILRELEVKANDSFDIYRDLYYEGAGTSSVYFWDTNEEDDEQETLDNGFAGVVLFKKETEDGSGKWDSIHVIEVIPEASSNATYKVTSSVILDLQNKKSSSLSLAGSLTRQLELTQSLSLDSALNVETAHLINLGTLIEKSEYNLRNLLQDVYFDKLRDIVMKDLRSVGDLSGKESDDKRQSELVKGLQSL</sequence>